<feature type="chain" id="PRO_1000215113" description="Protein translocase subunit SecA">
    <location>
        <begin position="1"/>
        <end position="1032"/>
    </location>
</feature>
<feature type="region of interest" description="Disordered" evidence="2">
    <location>
        <begin position="945"/>
        <end position="975"/>
    </location>
</feature>
<feature type="binding site" evidence="1">
    <location>
        <position position="121"/>
    </location>
    <ligand>
        <name>ATP</name>
        <dbReference type="ChEBI" id="CHEBI:30616"/>
    </ligand>
</feature>
<feature type="binding site" evidence="1">
    <location>
        <begin position="139"/>
        <end position="143"/>
    </location>
    <ligand>
        <name>ATP</name>
        <dbReference type="ChEBI" id="CHEBI:30616"/>
    </ligand>
</feature>
<feature type="binding site" evidence="1">
    <location>
        <position position="570"/>
    </location>
    <ligand>
        <name>ATP</name>
        <dbReference type="ChEBI" id="CHEBI:30616"/>
    </ligand>
</feature>
<feature type="binding site" evidence="1">
    <location>
        <position position="994"/>
    </location>
    <ligand>
        <name>Zn(2+)</name>
        <dbReference type="ChEBI" id="CHEBI:29105"/>
    </ligand>
</feature>
<feature type="binding site" evidence="1">
    <location>
        <position position="996"/>
    </location>
    <ligand>
        <name>Zn(2+)</name>
        <dbReference type="ChEBI" id="CHEBI:29105"/>
    </ligand>
</feature>
<feature type="binding site" evidence="1">
    <location>
        <position position="1005"/>
    </location>
    <ligand>
        <name>Zn(2+)</name>
        <dbReference type="ChEBI" id="CHEBI:29105"/>
    </ligand>
</feature>
<feature type="binding site" evidence="1">
    <location>
        <position position="1006"/>
    </location>
    <ligand>
        <name>Zn(2+)</name>
        <dbReference type="ChEBI" id="CHEBI:29105"/>
    </ligand>
</feature>
<keyword id="KW-0067">ATP-binding</keyword>
<keyword id="KW-1003">Cell membrane</keyword>
<keyword id="KW-0963">Cytoplasm</keyword>
<keyword id="KW-0472">Membrane</keyword>
<keyword id="KW-0479">Metal-binding</keyword>
<keyword id="KW-0547">Nucleotide-binding</keyword>
<keyword id="KW-0653">Protein transport</keyword>
<keyword id="KW-1278">Translocase</keyword>
<keyword id="KW-0811">Translocation</keyword>
<keyword id="KW-0813">Transport</keyword>
<keyword id="KW-0862">Zinc</keyword>
<name>SECA_HERA2</name>
<dbReference type="EC" id="7.4.2.8" evidence="1"/>
<dbReference type="EMBL" id="CP000875">
    <property type="protein sequence ID" value="ABX05842.1"/>
    <property type="molecule type" value="Genomic_DNA"/>
</dbReference>
<dbReference type="SMR" id="A9B6X4"/>
<dbReference type="FunCoup" id="A9B6X4">
    <property type="interactions" value="493"/>
</dbReference>
<dbReference type="STRING" id="316274.Haur_3205"/>
<dbReference type="KEGG" id="hau:Haur_3205"/>
<dbReference type="eggNOG" id="COG0653">
    <property type="taxonomic scope" value="Bacteria"/>
</dbReference>
<dbReference type="HOGENOM" id="CLU_005314_3_0_0"/>
<dbReference type="InParanoid" id="A9B6X4"/>
<dbReference type="Proteomes" id="UP000000787">
    <property type="component" value="Chromosome"/>
</dbReference>
<dbReference type="GO" id="GO:0031522">
    <property type="term" value="C:cell envelope Sec protein transport complex"/>
    <property type="evidence" value="ECO:0007669"/>
    <property type="project" value="TreeGrafter"/>
</dbReference>
<dbReference type="GO" id="GO:0005829">
    <property type="term" value="C:cytosol"/>
    <property type="evidence" value="ECO:0007669"/>
    <property type="project" value="TreeGrafter"/>
</dbReference>
<dbReference type="GO" id="GO:0005886">
    <property type="term" value="C:plasma membrane"/>
    <property type="evidence" value="ECO:0007669"/>
    <property type="project" value="UniProtKB-SubCell"/>
</dbReference>
<dbReference type="GO" id="GO:0005524">
    <property type="term" value="F:ATP binding"/>
    <property type="evidence" value="ECO:0007669"/>
    <property type="project" value="UniProtKB-UniRule"/>
</dbReference>
<dbReference type="GO" id="GO:0046872">
    <property type="term" value="F:metal ion binding"/>
    <property type="evidence" value="ECO:0007669"/>
    <property type="project" value="UniProtKB-KW"/>
</dbReference>
<dbReference type="GO" id="GO:0008564">
    <property type="term" value="F:protein-exporting ATPase activity"/>
    <property type="evidence" value="ECO:0007669"/>
    <property type="project" value="UniProtKB-EC"/>
</dbReference>
<dbReference type="GO" id="GO:0065002">
    <property type="term" value="P:intracellular protein transmembrane transport"/>
    <property type="evidence" value="ECO:0007669"/>
    <property type="project" value="UniProtKB-UniRule"/>
</dbReference>
<dbReference type="GO" id="GO:0017038">
    <property type="term" value="P:protein import"/>
    <property type="evidence" value="ECO:0007669"/>
    <property type="project" value="InterPro"/>
</dbReference>
<dbReference type="GO" id="GO:0006605">
    <property type="term" value="P:protein targeting"/>
    <property type="evidence" value="ECO:0007669"/>
    <property type="project" value="UniProtKB-UniRule"/>
</dbReference>
<dbReference type="GO" id="GO:0043952">
    <property type="term" value="P:protein transport by the Sec complex"/>
    <property type="evidence" value="ECO:0007669"/>
    <property type="project" value="TreeGrafter"/>
</dbReference>
<dbReference type="CDD" id="cd17928">
    <property type="entry name" value="DEXDc_SecA"/>
    <property type="match status" value="1"/>
</dbReference>
<dbReference type="CDD" id="cd18803">
    <property type="entry name" value="SF2_C_secA"/>
    <property type="match status" value="1"/>
</dbReference>
<dbReference type="FunFam" id="3.40.50.300:FF:000113">
    <property type="entry name" value="Preprotein translocase subunit SecA"/>
    <property type="match status" value="1"/>
</dbReference>
<dbReference type="FunFam" id="3.90.1440.10:FF:000001">
    <property type="entry name" value="Preprotein translocase subunit SecA"/>
    <property type="match status" value="1"/>
</dbReference>
<dbReference type="Gene3D" id="3.10.450.50">
    <property type="match status" value="1"/>
</dbReference>
<dbReference type="Gene3D" id="1.10.3060.10">
    <property type="entry name" value="Helical scaffold and wing domains of SecA"/>
    <property type="match status" value="1"/>
</dbReference>
<dbReference type="Gene3D" id="3.40.50.300">
    <property type="entry name" value="P-loop containing nucleotide triphosphate hydrolases"/>
    <property type="match status" value="2"/>
</dbReference>
<dbReference type="Gene3D" id="3.90.1440.10">
    <property type="entry name" value="SecA, preprotein cross-linking domain"/>
    <property type="match status" value="1"/>
</dbReference>
<dbReference type="HAMAP" id="MF_01382">
    <property type="entry name" value="SecA"/>
    <property type="match status" value="1"/>
</dbReference>
<dbReference type="InterPro" id="IPR014001">
    <property type="entry name" value="Helicase_ATP-bd"/>
</dbReference>
<dbReference type="InterPro" id="IPR001650">
    <property type="entry name" value="Helicase_C-like"/>
</dbReference>
<dbReference type="InterPro" id="IPR027417">
    <property type="entry name" value="P-loop_NTPase"/>
</dbReference>
<dbReference type="InterPro" id="IPR004027">
    <property type="entry name" value="SEC_C_motif"/>
</dbReference>
<dbReference type="InterPro" id="IPR000185">
    <property type="entry name" value="SecA"/>
</dbReference>
<dbReference type="InterPro" id="IPR020937">
    <property type="entry name" value="SecA_CS"/>
</dbReference>
<dbReference type="InterPro" id="IPR011115">
    <property type="entry name" value="SecA_DEAD"/>
</dbReference>
<dbReference type="InterPro" id="IPR014018">
    <property type="entry name" value="SecA_motor_DEAD"/>
</dbReference>
<dbReference type="InterPro" id="IPR011130">
    <property type="entry name" value="SecA_preprotein_X-link_dom"/>
</dbReference>
<dbReference type="InterPro" id="IPR044722">
    <property type="entry name" value="SecA_SF2_C"/>
</dbReference>
<dbReference type="InterPro" id="IPR011116">
    <property type="entry name" value="SecA_Wing/Scaffold"/>
</dbReference>
<dbReference type="InterPro" id="IPR036266">
    <property type="entry name" value="SecA_Wing/Scaffold_sf"/>
</dbReference>
<dbReference type="InterPro" id="IPR036670">
    <property type="entry name" value="SecA_X-link_sf"/>
</dbReference>
<dbReference type="NCBIfam" id="NF009538">
    <property type="entry name" value="PRK12904.1"/>
    <property type="match status" value="1"/>
</dbReference>
<dbReference type="NCBIfam" id="TIGR00963">
    <property type="entry name" value="secA"/>
    <property type="match status" value="1"/>
</dbReference>
<dbReference type="PANTHER" id="PTHR30612:SF0">
    <property type="entry name" value="CHLOROPLAST PROTEIN-TRANSPORTING ATPASE"/>
    <property type="match status" value="1"/>
</dbReference>
<dbReference type="PANTHER" id="PTHR30612">
    <property type="entry name" value="SECA INNER MEMBRANE COMPONENT OF SEC PROTEIN SECRETION SYSTEM"/>
    <property type="match status" value="1"/>
</dbReference>
<dbReference type="Pfam" id="PF21090">
    <property type="entry name" value="P-loop_SecA"/>
    <property type="match status" value="1"/>
</dbReference>
<dbReference type="Pfam" id="PF02810">
    <property type="entry name" value="SEC-C"/>
    <property type="match status" value="1"/>
</dbReference>
<dbReference type="Pfam" id="PF07517">
    <property type="entry name" value="SecA_DEAD"/>
    <property type="match status" value="1"/>
</dbReference>
<dbReference type="Pfam" id="PF01043">
    <property type="entry name" value="SecA_PP_bind"/>
    <property type="match status" value="1"/>
</dbReference>
<dbReference type="Pfam" id="PF07516">
    <property type="entry name" value="SecA_SW"/>
    <property type="match status" value="1"/>
</dbReference>
<dbReference type="PRINTS" id="PR00906">
    <property type="entry name" value="SECA"/>
</dbReference>
<dbReference type="SMART" id="SM00957">
    <property type="entry name" value="SecA_DEAD"/>
    <property type="match status" value="1"/>
</dbReference>
<dbReference type="SMART" id="SM00958">
    <property type="entry name" value="SecA_PP_bind"/>
    <property type="match status" value="1"/>
</dbReference>
<dbReference type="SUPFAM" id="SSF81886">
    <property type="entry name" value="Helical scaffold and wing domains of SecA"/>
    <property type="match status" value="1"/>
</dbReference>
<dbReference type="SUPFAM" id="SSF52540">
    <property type="entry name" value="P-loop containing nucleoside triphosphate hydrolases"/>
    <property type="match status" value="2"/>
</dbReference>
<dbReference type="SUPFAM" id="SSF81767">
    <property type="entry name" value="Pre-protein crosslinking domain of SecA"/>
    <property type="match status" value="1"/>
</dbReference>
<dbReference type="PROSITE" id="PS01312">
    <property type="entry name" value="SECA"/>
    <property type="match status" value="1"/>
</dbReference>
<dbReference type="PROSITE" id="PS51196">
    <property type="entry name" value="SECA_MOTOR_DEAD"/>
    <property type="match status" value="1"/>
</dbReference>
<sequence>MFKWLGKLLGDPNAKVVKKMQPTLDEINALEPKMKALSDEQLREKTAELRTRFAELTKADREALDDRYADENRHDSTVEKDYQKELRVIEDAALDELLPEAFALVREASSRVIGQRHYDVQMIGGIVLHEGRIAEMKTGEGKTLVASLPLFLNAIAGRGAHLITVNDYLAKVGGGWMGPIFHSLGMSTGYIAHDYSAIYDPNYIDPNAKQDDSRLVHWRPCSRREAYMADMTYGTNNEYGFDYLRDNMVQHKDQCVQRELHYAIVDEVDNILIDEARTPLIISGPAQESSDNYRRFSSLVRGLKRSSISPDEVRKGLKDDFDGDYWIDEKSRSITLTESGLEVMEKRLNLPDGENMYDAKNFELTHYLENALKAEYVFHRDVDYVVQNGEVVIVDEFTGRTMPGRRWSDGLHQAVEAKEAVEVRRENVTLATITFQNYFRMYNKLGGMTGTAITEAEEFSKIYNLEVVIIPTNRQVVREDYRDHIYASQKAKYNAVLREIKEMHEVGRPVLVGTTSVESSEIVSNLLKQEGLEHYLLNAKQHEREAYIVAQAGRTGAITIATNMAGRGTDILLGGNPDGLIEEHLKALGTTITDATPEQLAQAQAQAKADVEAERKAVMEAGGLHIIGTERHEARRIDNQLRGRAGRQGDPGSSRFFISLEDELMTRFGRIDTIKRLMERMSDGDEELPLESGLLDKAIESAQTRVEGYNFDVRKHVVEYDDVVNKQREVIYADRHAILGGEDMGDRILEMVVDEIDIHVEEFLDNRELDKPDLEGFLRQLYSIVPQLKAQETELAARFKGKQADEIGEIATEVVEEAYNRLGEELATQYTTLLQRGVQPIPGVSGPEAFFAHFERQEMLGAIDREWIDYLTAVDELRQGIGNVAIAQQDPLVAFKREAFKMFDELKGNIQNRIVYNFFTDAANWQVRLRQVELEMEARLALAQTAGGSENATEDAPKPAKRGVGGAARRVSNAAGQAAPARRIVIKIGRNDPCPCDSGKKFKACHGLPGKEAELEAILAVKHTHAQAVGKK</sequence>
<accession>A9B6X4</accession>
<organism>
    <name type="scientific">Herpetosiphon aurantiacus (strain ATCC 23779 / DSM 785 / 114-95)</name>
    <dbReference type="NCBI Taxonomy" id="316274"/>
    <lineage>
        <taxon>Bacteria</taxon>
        <taxon>Bacillati</taxon>
        <taxon>Chloroflexota</taxon>
        <taxon>Chloroflexia</taxon>
        <taxon>Herpetosiphonales</taxon>
        <taxon>Herpetosiphonaceae</taxon>
        <taxon>Herpetosiphon</taxon>
    </lineage>
</organism>
<gene>
    <name evidence="1" type="primary">secA</name>
    <name type="ordered locus">Haur_3205</name>
</gene>
<protein>
    <recommendedName>
        <fullName evidence="1">Protein translocase subunit SecA</fullName>
        <ecNumber evidence="1">7.4.2.8</ecNumber>
    </recommendedName>
</protein>
<evidence type="ECO:0000255" key="1">
    <source>
        <dbReference type="HAMAP-Rule" id="MF_01382"/>
    </source>
</evidence>
<evidence type="ECO:0000256" key="2">
    <source>
        <dbReference type="SAM" id="MobiDB-lite"/>
    </source>
</evidence>
<reference key="1">
    <citation type="journal article" date="2011" name="Stand. Genomic Sci.">
        <title>Complete genome sequence of the filamentous gliding predatory bacterium Herpetosiphon aurantiacus type strain (114-95(T)).</title>
        <authorList>
            <person name="Kiss H."/>
            <person name="Nett M."/>
            <person name="Domin N."/>
            <person name="Martin K."/>
            <person name="Maresca J.A."/>
            <person name="Copeland A."/>
            <person name="Lapidus A."/>
            <person name="Lucas S."/>
            <person name="Berry K.W."/>
            <person name="Glavina Del Rio T."/>
            <person name="Dalin E."/>
            <person name="Tice H."/>
            <person name="Pitluck S."/>
            <person name="Richardson P."/>
            <person name="Bruce D."/>
            <person name="Goodwin L."/>
            <person name="Han C."/>
            <person name="Detter J.C."/>
            <person name="Schmutz J."/>
            <person name="Brettin T."/>
            <person name="Land M."/>
            <person name="Hauser L."/>
            <person name="Kyrpides N.C."/>
            <person name="Ivanova N."/>
            <person name="Goeker M."/>
            <person name="Woyke T."/>
            <person name="Klenk H.P."/>
            <person name="Bryant D.A."/>
        </authorList>
    </citation>
    <scope>NUCLEOTIDE SEQUENCE [LARGE SCALE GENOMIC DNA]</scope>
    <source>
        <strain>ATCC 23779 / DSM 785 / 114-95</strain>
    </source>
</reference>
<proteinExistence type="inferred from homology"/>
<comment type="function">
    <text evidence="1">Part of the Sec protein translocase complex. Interacts with the SecYEG preprotein conducting channel. Has a central role in coupling the hydrolysis of ATP to the transfer of proteins into and across the cell membrane, serving as an ATP-driven molecular motor driving the stepwise translocation of polypeptide chains across the membrane.</text>
</comment>
<comment type="catalytic activity">
    <reaction evidence="1">
        <text>ATP + H2O + cellular proteinSide 1 = ADP + phosphate + cellular proteinSide 2.</text>
        <dbReference type="EC" id="7.4.2.8"/>
    </reaction>
</comment>
<comment type="cofactor">
    <cofactor evidence="1">
        <name>Zn(2+)</name>
        <dbReference type="ChEBI" id="CHEBI:29105"/>
    </cofactor>
    <text evidence="1">May bind 1 zinc ion per subunit.</text>
</comment>
<comment type="subunit">
    <text evidence="1">Monomer and homodimer. Part of the essential Sec protein translocation apparatus which comprises SecA, SecYEG and auxiliary proteins SecDF. Other proteins may also be involved.</text>
</comment>
<comment type="subcellular location">
    <subcellularLocation>
        <location evidence="1">Cell membrane</location>
        <topology evidence="1">Peripheral membrane protein</topology>
        <orientation evidence="1">Cytoplasmic side</orientation>
    </subcellularLocation>
    <subcellularLocation>
        <location evidence="1">Cytoplasm</location>
    </subcellularLocation>
    <text evidence="1">Distribution is 50-50.</text>
</comment>
<comment type="similarity">
    <text evidence="1">Belongs to the SecA family.</text>
</comment>